<comment type="function">
    <text evidence="1">Catalyzes the last two sequential reactions in the de novo biosynthetic pathway for UDP-N-acetylglucosamine (UDP-GlcNAc). The C-terminal domain catalyzes the transfer of acetyl group from acetyl coenzyme A to glucosamine-1-phosphate (GlcN-1-P) to produce N-acetylglucosamine-1-phosphate (GlcNAc-1-P), which is converted into UDP-GlcNAc by the transfer of uridine 5-monophosphate (from uridine 5-triphosphate), a reaction catalyzed by the N-terminal domain.</text>
</comment>
<comment type="catalytic activity">
    <reaction evidence="1">
        <text>alpha-D-glucosamine 1-phosphate + acetyl-CoA = N-acetyl-alpha-D-glucosamine 1-phosphate + CoA + H(+)</text>
        <dbReference type="Rhea" id="RHEA:13725"/>
        <dbReference type="ChEBI" id="CHEBI:15378"/>
        <dbReference type="ChEBI" id="CHEBI:57287"/>
        <dbReference type="ChEBI" id="CHEBI:57288"/>
        <dbReference type="ChEBI" id="CHEBI:57776"/>
        <dbReference type="ChEBI" id="CHEBI:58516"/>
        <dbReference type="EC" id="2.3.1.157"/>
    </reaction>
</comment>
<comment type="catalytic activity">
    <reaction evidence="1">
        <text>N-acetyl-alpha-D-glucosamine 1-phosphate + UTP + H(+) = UDP-N-acetyl-alpha-D-glucosamine + diphosphate</text>
        <dbReference type="Rhea" id="RHEA:13509"/>
        <dbReference type="ChEBI" id="CHEBI:15378"/>
        <dbReference type="ChEBI" id="CHEBI:33019"/>
        <dbReference type="ChEBI" id="CHEBI:46398"/>
        <dbReference type="ChEBI" id="CHEBI:57705"/>
        <dbReference type="ChEBI" id="CHEBI:57776"/>
        <dbReference type="EC" id="2.7.7.23"/>
    </reaction>
</comment>
<comment type="cofactor">
    <cofactor evidence="1">
        <name>Mg(2+)</name>
        <dbReference type="ChEBI" id="CHEBI:18420"/>
    </cofactor>
    <text evidence="1">Binds 1 Mg(2+) ion per subunit.</text>
</comment>
<comment type="pathway">
    <text evidence="1">Nucleotide-sugar biosynthesis; UDP-N-acetyl-alpha-D-glucosamine biosynthesis; N-acetyl-alpha-D-glucosamine 1-phosphate from alpha-D-glucosamine 6-phosphate (route II): step 2/2.</text>
</comment>
<comment type="pathway">
    <text evidence="1">Nucleotide-sugar biosynthesis; UDP-N-acetyl-alpha-D-glucosamine biosynthesis; UDP-N-acetyl-alpha-D-glucosamine from N-acetyl-alpha-D-glucosamine 1-phosphate: step 1/1.</text>
</comment>
<comment type="pathway">
    <text evidence="1">Bacterial outer membrane biogenesis; LPS lipid A biosynthesis.</text>
</comment>
<comment type="subunit">
    <text evidence="1">Homotrimer.</text>
</comment>
<comment type="subcellular location">
    <subcellularLocation>
        <location evidence="1">Cytoplasm</location>
    </subcellularLocation>
</comment>
<comment type="similarity">
    <text evidence="1">In the N-terminal section; belongs to the N-acetylglucosamine-1-phosphate uridyltransferase family.</text>
</comment>
<comment type="similarity">
    <text evidence="1">In the C-terminal section; belongs to the transferase hexapeptide repeat family.</text>
</comment>
<organism>
    <name type="scientific">Burkholderia pseudomallei (strain 1106a)</name>
    <dbReference type="NCBI Taxonomy" id="357348"/>
    <lineage>
        <taxon>Bacteria</taxon>
        <taxon>Pseudomonadati</taxon>
        <taxon>Pseudomonadota</taxon>
        <taxon>Betaproteobacteria</taxon>
        <taxon>Burkholderiales</taxon>
        <taxon>Burkholderiaceae</taxon>
        <taxon>Burkholderia</taxon>
        <taxon>pseudomallei group</taxon>
    </lineage>
</organism>
<keyword id="KW-0012">Acyltransferase</keyword>
<keyword id="KW-0133">Cell shape</keyword>
<keyword id="KW-0961">Cell wall biogenesis/degradation</keyword>
<keyword id="KW-0963">Cytoplasm</keyword>
<keyword id="KW-0460">Magnesium</keyword>
<keyword id="KW-0479">Metal-binding</keyword>
<keyword id="KW-0511">Multifunctional enzyme</keyword>
<keyword id="KW-0548">Nucleotidyltransferase</keyword>
<keyword id="KW-0573">Peptidoglycan synthesis</keyword>
<keyword id="KW-0677">Repeat</keyword>
<keyword id="KW-0808">Transferase</keyword>
<gene>
    <name evidence="1" type="primary">glmU</name>
    <name type="ordered locus">BURPS1106A_0337</name>
</gene>
<feature type="chain" id="PRO_1000056144" description="Bifunctional protein GlmU">
    <location>
        <begin position="1"/>
        <end position="453"/>
    </location>
</feature>
<feature type="region of interest" description="Pyrophosphorylase" evidence="1">
    <location>
        <begin position="1"/>
        <end position="225"/>
    </location>
</feature>
<feature type="region of interest" description="Linker" evidence="1">
    <location>
        <begin position="226"/>
        <end position="246"/>
    </location>
</feature>
<feature type="region of interest" description="N-acetyltransferase" evidence="1">
    <location>
        <begin position="247"/>
        <end position="453"/>
    </location>
</feature>
<feature type="active site" description="Proton acceptor" evidence="1">
    <location>
        <position position="359"/>
    </location>
</feature>
<feature type="binding site" evidence="1">
    <location>
        <begin position="6"/>
        <end position="9"/>
    </location>
    <ligand>
        <name>UDP-N-acetyl-alpha-D-glucosamine</name>
        <dbReference type="ChEBI" id="CHEBI:57705"/>
    </ligand>
</feature>
<feature type="binding site" evidence="1">
    <location>
        <position position="20"/>
    </location>
    <ligand>
        <name>UDP-N-acetyl-alpha-D-glucosamine</name>
        <dbReference type="ChEBI" id="CHEBI:57705"/>
    </ligand>
</feature>
<feature type="binding site" evidence="1">
    <location>
        <position position="71"/>
    </location>
    <ligand>
        <name>UDP-N-acetyl-alpha-D-glucosamine</name>
        <dbReference type="ChEBI" id="CHEBI:57705"/>
    </ligand>
</feature>
<feature type="binding site" evidence="1">
    <location>
        <begin position="76"/>
        <end position="77"/>
    </location>
    <ligand>
        <name>UDP-N-acetyl-alpha-D-glucosamine</name>
        <dbReference type="ChEBI" id="CHEBI:57705"/>
    </ligand>
</feature>
<feature type="binding site" evidence="1">
    <location>
        <begin position="98"/>
        <end position="100"/>
    </location>
    <ligand>
        <name>UDP-N-acetyl-alpha-D-glucosamine</name>
        <dbReference type="ChEBI" id="CHEBI:57705"/>
    </ligand>
</feature>
<feature type="binding site" evidence="1">
    <location>
        <position position="100"/>
    </location>
    <ligand>
        <name>Mg(2+)</name>
        <dbReference type="ChEBI" id="CHEBI:18420"/>
    </ligand>
</feature>
<feature type="binding site" evidence="1">
    <location>
        <position position="135"/>
    </location>
    <ligand>
        <name>UDP-N-acetyl-alpha-D-glucosamine</name>
        <dbReference type="ChEBI" id="CHEBI:57705"/>
    </ligand>
</feature>
<feature type="binding site" evidence="1">
    <location>
        <position position="150"/>
    </location>
    <ligand>
        <name>UDP-N-acetyl-alpha-D-glucosamine</name>
        <dbReference type="ChEBI" id="CHEBI:57705"/>
    </ligand>
</feature>
<feature type="binding site" evidence="1">
    <location>
        <position position="165"/>
    </location>
    <ligand>
        <name>UDP-N-acetyl-alpha-D-glucosamine</name>
        <dbReference type="ChEBI" id="CHEBI:57705"/>
    </ligand>
</feature>
<feature type="binding site" evidence="1">
    <location>
        <position position="223"/>
    </location>
    <ligand>
        <name>Mg(2+)</name>
        <dbReference type="ChEBI" id="CHEBI:18420"/>
    </ligand>
</feature>
<feature type="binding site" evidence="1">
    <location>
        <position position="223"/>
    </location>
    <ligand>
        <name>UDP-N-acetyl-alpha-D-glucosamine</name>
        <dbReference type="ChEBI" id="CHEBI:57705"/>
    </ligand>
</feature>
<feature type="binding site" evidence="1">
    <location>
        <position position="329"/>
    </location>
    <ligand>
        <name>UDP-N-acetyl-alpha-D-glucosamine</name>
        <dbReference type="ChEBI" id="CHEBI:57705"/>
    </ligand>
</feature>
<feature type="binding site" evidence="1">
    <location>
        <position position="347"/>
    </location>
    <ligand>
        <name>UDP-N-acetyl-alpha-D-glucosamine</name>
        <dbReference type="ChEBI" id="CHEBI:57705"/>
    </ligand>
</feature>
<feature type="binding site" evidence="1">
    <location>
        <position position="362"/>
    </location>
    <ligand>
        <name>UDP-N-acetyl-alpha-D-glucosamine</name>
        <dbReference type="ChEBI" id="CHEBI:57705"/>
    </ligand>
</feature>
<feature type="binding site" evidence="1">
    <location>
        <position position="373"/>
    </location>
    <ligand>
        <name>UDP-N-acetyl-alpha-D-glucosamine</name>
        <dbReference type="ChEBI" id="CHEBI:57705"/>
    </ligand>
</feature>
<feature type="binding site" evidence="1">
    <location>
        <position position="376"/>
    </location>
    <ligand>
        <name>acetyl-CoA</name>
        <dbReference type="ChEBI" id="CHEBI:57288"/>
    </ligand>
</feature>
<feature type="binding site" evidence="1">
    <location>
        <begin position="382"/>
        <end position="383"/>
    </location>
    <ligand>
        <name>acetyl-CoA</name>
        <dbReference type="ChEBI" id="CHEBI:57288"/>
    </ligand>
</feature>
<feature type="binding site" evidence="1">
    <location>
        <position position="401"/>
    </location>
    <ligand>
        <name>acetyl-CoA</name>
        <dbReference type="ChEBI" id="CHEBI:57288"/>
    </ligand>
</feature>
<feature type="binding site" evidence="1">
    <location>
        <position position="419"/>
    </location>
    <ligand>
        <name>acetyl-CoA</name>
        <dbReference type="ChEBI" id="CHEBI:57288"/>
    </ligand>
</feature>
<dbReference type="EC" id="2.7.7.23" evidence="1"/>
<dbReference type="EC" id="2.3.1.157" evidence="1"/>
<dbReference type="EMBL" id="CP000572">
    <property type="protein sequence ID" value="ABN88920.1"/>
    <property type="molecule type" value="Genomic_DNA"/>
</dbReference>
<dbReference type="RefSeq" id="WP_004190034.1">
    <property type="nucleotide sequence ID" value="NC_009076.1"/>
</dbReference>
<dbReference type="SMR" id="A3NQK0"/>
<dbReference type="GeneID" id="92981044"/>
<dbReference type="KEGG" id="bpl:BURPS1106A_0337"/>
<dbReference type="HOGENOM" id="CLU_029499_15_2_4"/>
<dbReference type="UniPathway" id="UPA00113">
    <property type="reaction ID" value="UER00532"/>
</dbReference>
<dbReference type="UniPathway" id="UPA00113">
    <property type="reaction ID" value="UER00533"/>
</dbReference>
<dbReference type="UniPathway" id="UPA00973"/>
<dbReference type="Proteomes" id="UP000006738">
    <property type="component" value="Chromosome I"/>
</dbReference>
<dbReference type="GO" id="GO:0005737">
    <property type="term" value="C:cytoplasm"/>
    <property type="evidence" value="ECO:0007669"/>
    <property type="project" value="UniProtKB-SubCell"/>
</dbReference>
<dbReference type="GO" id="GO:0016020">
    <property type="term" value="C:membrane"/>
    <property type="evidence" value="ECO:0007669"/>
    <property type="project" value="GOC"/>
</dbReference>
<dbReference type="GO" id="GO:0019134">
    <property type="term" value="F:glucosamine-1-phosphate N-acetyltransferase activity"/>
    <property type="evidence" value="ECO:0007669"/>
    <property type="project" value="UniProtKB-UniRule"/>
</dbReference>
<dbReference type="GO" id="GO:0000287">
    <property type="term" value="F:magnesium ion binding"/>
    <property type="evidence" value="ECO:0007669"/>
    <property type="project" value="UniProtKB-UniRule"/>
</dbReference>
<dbReference type="GO" id="GO:0003977">
    <property type="term" value="F:UDP-N-acetylglucosamine diphosphorylase activity"/>
    <property type="evidence" value="ECO:0007669"/>
    <property type="project" value="UniProtKB-UniRule"/>
</dbReference>
<dbReference type="GO" id="GO:0000902">
    <property type="term" value="P:cell morphogenesis"/>
    <property type="evidence" value="ECO:0007669"/>
    <property type="project" value="UniProtKB-UniRule"/>
</dbReference>
<dbReference type="GO" id="GO:0071555">
    <property type="term" value="P:cell wall organization"/>
    <property type="evidence" value="ECO:0007669"/>
    <property type="project" value="UniProtKB-KW"/>
</dbReference>
<dbReference type="GO" id="GO:0009245">
    <property type="term" value="P:lipid A biosynthetic process"/>
    <property type="evidence" value="ECO:0007669"/>
    <property type="project" value="UniProtKB-UniRule"/>
</dbReference>
<dbReference type="GO" id="GO:0009252">
    <property type="term" value="P:peptidoglycan biosynthetic process"/>
    <property type="evidence" value="ECO:0007669"/>
    <property type="project" value="UniProtKB-UniRule"/>
</dbReference>
<dbReference type="GO" id="GO:0008360">
    <property type="term" value="P:regulation of cell shape"/>
    <property type="evidence" value="ECO:0007669"/>
    <property type="project" value="UniProtKB-KW"/>
</dbReference>
<dbReference type="GO" id="GO:0006048">
    <property type="term" value="P:UDP-N-acetylglucosamine biosynthetic process"/>
    <property type="evidence" value="ECO:0007669"/>
    <property type="project" value="UniProtKB-UniPathway"/>
</dbReference>
<dbReference type="CDD" id="cd02540">
    <property type="entry name" value="GT2_GlmU_N_bac"/>
    <property type="match status" value="1"/>
</dbReference>
<dbReference type="CDD" id="cd03353">
    <property type="entry name" value="LbH_GlmU_C"/>
    <property type="match status" value="1"/>
</dbReference>
<dbReference type="Gene3D" id="2.160.10.10">
    <property type="entry name" value="Hexapeptide repeat proteins"/>
    <property type="match status" value="1"/>
</dbReference>
<dbReference type="Gene3D" id="3.90.550.10">
    <property type="entry name" value="Spore Coat Polysaccharide Biosynthesis Protein SpsA, Chain A"/>
    <property type="match status" value="1"/>
</dbReference>
<dbReference type="HAMAP" id="MF_01631">
    <property type="entry name" value="GlmU"/>
    <property type="match status" value="1"/>
</dbReference>
<dbReference type="InterPro" id="IPR005882">
    <property type="entry name" value="Bifunctional_GlmU"/>
</dbReference>
<dbReference type="InterPro" id="IPR050065">
    <property type="entry name" value="GlmU-like"/>
</dbReference>
<dbReference type="InterPro" id="IPR038009">
    <property type="entry name" value="GlmU_C_LbH"/>
</dbReference>
<dbReference type="InterPro" id="IPR001451">
    <property type="entry name" value="Hexapep"/>
</dbReference>
<dbReference type="InterPro" id="IPR025877">
    <property type="entry name" value="MobA-like_NTP_Trfase"/>
</dbReference>
<dbReference type="InterPro" id="IPR029044">
    <property type="entry name" value="Nucleotide-diphossugar_trans"/>
</dbReference>
<dbReference type="InterPro" id="IPR011004">
    <property type="entry name" value="Trimer_LpxA-like_sf"/>
</dbReference>
<dbReference type="NCBIfam" id="TIGR01173">
    <property type="entry name" value="glmU"/>
    <property type="match status" value="1"/>
</dbReference>
<dbReference type="PANTHER" id="PTHR43584:SF3">
    <property type="entry name" value="BIFUNCTIONAL PROTEIN GLMU"/>
    <property type="match status" value="1"/>
</dbReference>
<dbReference type="PANTHER" id="PTHR43584">
    <property type="entry name" value="NUCLEOTIDYL TRANSFERASE"/>
    <property type="match status" value="1"/>
</dbReference>
<dbReference type="Pfam" id="PF00132">
    <property type="entry name" value="Hexapep"/>
    <property type="match status" value="2"/>
</dbReference>
<dbReference type="Pfam" id="PF12804">
    <property type="entry name" value="NTP_transf_3"/>
    <property type="match status" value="1"/>
</dbReference>
<dbReference type="SUPFAM" id="SSF53448">
    <property type="entry name" value="Nucleotide-diphospho-sugar transferases"/>
    <property type="match status" value="1"/>
</dbReference>
<dbReference type="SUPFAM" id="SSF51161">
    <property type="entry name" value="Trimeric LpxA-like enzymes"/>
    <property type="match status" value="1"/>
</dbReference>
<accession>A3NQK0</accession>
<proteinExistence type="inferred from homology"/>
<evidence type="ECO:0000255" key="1">
    <source>
        <dbReference type="HAMAP-Rule" id="MF_01631"/>
    </source>
</evidence>
<sequence length="453" mass="47580">MNIVILAAGTGKRMRSALPKVLHPLAGRPLLSHVIDTARALAPSRLVVVIGHGAEQVRAAVAAPDVQFAVQEQQLGTGHAVRQALPLLDPSQPTLVLYGDVPLTRTATLKRLADAATDARYGVLTVTLDDPTGYGRIVRDQAGCVTRIVEQKDASPDELRIDEINTGIVVAPTAQLSMWLGALGNDNAQGEYYLTDVVEQAIEAGFEIVTTQPDDEWETLGVNSKAQLAELERIHQRNLADALLAAGVTLADPARIDVRGTLACGRDVSIDVNCVFEGDVTLADGVTIGANCVIRHAAIAAGARVDAFSHLDGATVGANAVVGPYARLRPGAVLAADAHVGNFVEVKNATLGQGSKANHLTYLGDADIGARVNVGAGTITCNYDGANKFRTVIEDDVFVGSDTQFVAPVRVGRGVTVAAGTTVWKDVAADMLVLNDKTQTAKSGYVRPVKKKS</sequence>
<reference key="1">
    <citation type="journal article" date="2010" name="Genome Biol. Evol.">
        <title>Continuing evolution of Burkholderia mallei through genome reduction and large-scale rearrangements.</title>
        <authorList>
            <person name="Losada L."/>
            <person name="Ronning C.M."/>
            <person name="DeShazer D."/>
            <person name="Woods D."/>
            <person name="Fedorova N."/>
            <person name="Kim H.S."/>
            <person name="Shabalina S.A."/>
            <person name="Pearson T.R."/>
            <person name="Brinkac L."/>
            <person name="Tan P."/>
            <person name="Nandi T."/>
            <person name="Crabtree J."/>
            <person name="Badger J."/>
            <person name="Beckstrom-Sternberg S."/>
            <person name="Saqib M."/>
            <person name="Schutzer S.E."/>
            <person name="Keim P."/>
            <person name="Nierman W.C."/>
        </authorList>
    </citation>
    <scope>NUCLEOTIDE SEQUENCE [LARGE SCALE GENOMIC DNA]</scope>
    <source>
        <strain>1106a</strain>
    </source>
</reference>
<name>GLMU_BURP0</name>
<protein>
    <recommendedName>
        <fullName evidence="1">Bifunctional protein GlmU</fullName>
    </recommendedName>
    <domain>
        <recommendedName>
            <fullName evidence="1">UDP-N-acetylglucosamine pyrophosphorylase</fullName>
            <ecNumber evidence="1">2.7.7.23</ecNumber>
        </recommendedName>
        <alternativeName>
            <fullName evidence="1">N-acetylglucosamine-1-phosphate uridyltransferase</fullName>
        </alternativeName>
    </domain>
    <domain>
        <recommendedName>
            <fullName evidence="1">Glucosamine-1-phosphate N-acetyltransferase</fullName>
            <ecNumber evidence="1">2.3.1.157</ecNumber>
        </recommendedName>
    </domain>
</protein>